<proteinExistence type="inferred from homology"/>
<keyword id="KW-0456">Lyase</keyword>
<comment type="function">
    <text evidence="1">Catalyzes the formation of methylglyoxal from dihydroxyacetone phosphate.</text>
</comment>
<comment type="catalytic activity">
    <reaction evidence="1">
        <text>dihydroxyacetone phosphate = methylglyoxal + phosphate</text>
        <dbReference type="Rhea" id="RHEA:17937"/>
        <dbReference type="ChEBI" id="CHEBI:17158"/>
        <dbReference type="ChEBI" id="CHEBI:43474"/>
        <dbReference type="ChEBI" id="CHEBI:57642"/>
        <dbReference type="EC" id="4.2.3.3"/>
    </reaction>
</comment>
<comment type="similarity">
    <text evidence="1">Belongs to the methylglyoxal synthase family.</text>
</comment>
<organism>
    <name type="scientific">Escherichia coli (strain K12 / DH10B)</name>
    <dbReference type="NCBI Taxonomy" id="316385"/>
    <lineage>
        <taxon>Bacteria</taxon>
        <taxon>Pseudomonadati</taxon>
        <taxon>Pseudomonadota</taxon>
        <taxon>Gammaproteobacteria</taxon>
        <taxon>Enterobacterales</taxon>
        <taxon>Enterobacteriaceae</taxon>
        <taxon>Escherichia</taxon>
    </lineage>
</organism>
<gene>
    <name evidence="1" type="primary">mgsA</name>
    <name type="ordered locus">ECDH10B_1033</name>
</gene>
<protein>
    <recommendedName>
        <fullName evidence="1">Methylglyoxal synthase</fullName>
        <shortName evidence="1">MGS</shortName>
        <ecNumber evidence="1">4.2.3.3</ecNumber>
    </recommendedName>
</protein>
<name>MGSA_ECODH</name>
<feature type="chain" id="PRO_1000128990" description="Methylglyoxal synthase">
    <location>
        <begin position="1"/>
        <end position="152"/>
    </location>
</feature>
<feature type="domain" description="MGS-like" evidence="1">
    <location>
        <begin position="6"/>
        <end position="152"/>
    </location>
</feature>
<feature type="active site" description="Proton donor/acceptor" evidence="1">
    <location>
        <position position="71"/>
    </location>
</feature>
<feature type="binding site" evidence="1">
    <location>
        <position position="19"/>
    </location>
    <ligand>
        <name>substrate</name>
    </ligand>
</feature>
<feature type="binding site" evidence="1">
    <location>
        <position position="23"/>
    </location>
    <ligand>
        <name>substrate</name>
    </ligand>
</feature>
<feature type="binding site" evidence="1">
    <location>
        <begin position="45"/>
        <end position="48"/>
    </location>
    <ligand>
        <name>substrate</name>
    </ligand>
</feature>
<feature type="binding site" evidence="1">
    <location>
        <begin position="65"/>
        <end position="66"/>
    </location>
    <ligand>
        <name>substrate</name>
    </ligand>
</feature>
<feature type="binding site" evidence="1">
    <location>
        <position position="98"/>
    </location>
    <ligand>
        <name>substrate</name>
    </ligand>
</feature>
<reference key="1">
    <citation type="journal article" date="2008" name="J. Bacteriol.">
        <title>The complete genome sequence of Escherichia coli DH10B: insights into the biology of a laboratory workhorse.</title>
        <authorList>
            <person name="Durfee T."/>
            <person name="Nelson R."/>
            <person name="Baldwin S."/>
            <person name="Plunkett G. III"/>
            <person name="Burland V."/>
            <person name="Mau B."/>
            <person name="Petrosino J.F."/>
            <person name="Qin X."/>
            <person name="Muzny D.M."/>
            <person name="Ayele M."/>
            <person name="Gibbs R.A."/>
            <person name="Csorgo B."/>
            <person name="Posfai G."/>
            <person name="Weinstock G.M."/>
            <person name="Blattner F.R."/>
        </authorList>
    </citation>
    <scope>NUCLEOTIDE SEQUENCE [LARGE SCALE GENOMIC DNA]</scope>
    <source>
        <strain>K12 / DH10B</strain>
    </source>
</reference>
<sequence length="152" mass="16919">MELTTRTLPARKHIALVAHDHCKQMLMSWVERHQPLLEQHVLYATGTTGNLISRATGMNVNAMLSGPMGGDQQVGALISEGKIDVLIFFWDPLNAVPHDPDVKALLRLATVWNIPVATNVATADFIIQSPHFNDAVDILIPDYQRYLADRLK</sequence>
<evidence type="ECO:0000255" key="1">
    <source>
        <dbReference type="HAMAP-Rule" id="MF_00549"/>
    </source>
</evidence>
<accession>B1X8R7</accession>
<dbReference type="EC" id="4.2.3.3" evidence="1"/>
<dbReference type="EMBL" id="CP000948">
    <property type="protein sequence ID" value="ACB02163.1"/>
    <property type="molecule type" value="Genomic_DNA"/>
</dbReference>
<dbReference type="RefSeq" id="WP_000424181.1">
    <property type="nucleotide sequence ID" value="NC_010473.1"/>
</dbReference>
<dbReference type="SMR" id="B1X8R7"/>
<dbReference type="GeneID" id="93776451"/>
<dbReference type="KEGG" id="ecd:ECDH10B_1033"/>
<dbReference type="HOGENOM" id="CLU_120420_0_1_6"/>
<dbReference type="GO" id="GO:0005829">
    <property type="term" value="C:cytosol"/>
    <property type="evidence" value="ECO:0007669"/>
    <property type="project" value="TreeGrafter"/>
</dbReference>
<dbReference type="GO" id="GO:0008929">
    <property type="term" value="F:methylglyoxal synthase activity"/>
    <property type="evidence" value="ECO:0007669"/>
    <property type="project" value="UniProtKB-UniRule"/>
</dbReference>
<dbReference type="GO" id="GO:0019242">
    <property type="term" value="P:methylglyoxal biosynthetic process"/>
    <property type="evidence" value="ECO:0007669"/>
    <property type="project" value="UniProtKB-UniRule"/>
</dbReference>
<dbReference type="CDD" id="cd01422">
    <property type="entry name" value="MGS"/>
    <property type="match status" value="1"/>
</dbReference>
<dbReference type="FunFam" id="3.40.50.1380:FF:000002">
    <property type="entry name" value="Methylglyoxal synthase"/>
    <property type="match status" value="1"/>
</dbReference>
<dbReference type="Gene3D" id="3.40.50.1380">
    <property type="entry name" value="Methylglyoxal synthase-like domain"/>
    <property type="match status" value="1"/>
</dbReference>
<dbReference type="HAMAP" id="MF_00549">
    <property type="entry name" value="Methylglyoxal_synth"/>
    <property type="match status" value="1"/>
</dbReference>
<dbReference type="InterPro" id="IPR004363">
    <property type="entry name" value="Methylgl_synth"/>
</dbReference>
<dbReference type="InterPro" id="IPR018148">
    <property type="entry name" value="Methylglyoxal_synth_AS"/>
</dbReference>
<dbReference type="InterPro" id="IPR011607">
    <property type="entry name" value="MGS-like_dom"/>
</dbReference>
<dbReference type="InterPro" id="IPR036914">
    <property type="entry name" value="MGS-like_dom_sf"/>
</dbReference>
<dbReference type="NCBIfam" id="TIGR00160">
    <property type="entry name" value="MGSA"/>
    <property type="match status" value="1"/>
</dbReference>
<dbReference type="NCBIfam" id="NF003559">
    <property type="entry name" value="PRK05234.1"/>
    <property type="match status" value="1"/>
</dbReference>
<dbReference type="PANTHER" id="PTHR30492">
    <property type="entry name" value="METHYLGLYOXAL SYNTHASE"/>
    <property type="match status" value="1"/>
</dbReference>
<dbReference type="PANTHER" id="PTHR30492:SF0">
    <property type="entry name" value="METHYLGLYOXAL SYNTHASE"/>
    <property type="match status" value="1"/>
</dbReference>
<dbReference type="Pfam" id="PF02142">
    <property type="entry name" value="MGS"/>
    <property type="match status" value="1"/>
</dbReference>
<dbReference type="PIRSF" id="PIRSF006614">
    <property type="entry name" value="Methylglyox_syn"/>
    <property type="match status" value="1"/>
</dbReference>
<dbReference type="SMART" id="SM00851">
    <property type="entry name" value="MGS"/>
    <property type="match status" value="1"/>
</dbReference>
<dbReference type="SUPFAM" id="SSF52335">
    <property type="entry name" value="Methylglyoxal synthase-like"/>
    <property type="match status" value="1"/>
</dbReference>
<dbReference type="PROSITE" id="PS01335">
    <property type="entry name" value="METHYLGLYOXAL_SYNTH"/>
    <property type="match status" value="1"/>
</dbReference>
<dbReference type="PROSITE" id="PS51855">
    <property type="entry name" value="MGS"/>
    <property type="match status" value="1"/>
</dbReference>